<accession>A5IR97</accession>
<gene>
    <name type="ordered locus">SaurJH9_0919</name>
</gene>
<reference key="1">
    <citation type="submission" date="2007-05" db="EMBL/GenBank/DDBJ databases">
        <title>Complete sequence of chromosome of Staphylococcus aureus subsp. aureus JH9.</title>
        <authorList>
            <consortium name="US DOE Joint Genome Institute"/>
            <person name="Copeland A."/>
            <person name="Lucas S."/>
            <person name="Lapidus A."/>
            <person name="Barry K."/>
            <person name="Detter J.C."/>
            <person name="Glavina del Rio T."/>
            <person name="Hammon N."/>
            <person name="Israni S."/>
            <person name="Pitluck S."/>
            <person name="Chain P."/>
            <person name="Malfatti S."/>
            <person name="Shin M."/>
            <person name="Vergez L."/>
            <person name="Schmutz J."/>
            <person name="Larimer F."/>
            <person name="Land M."/>
            <person name="Hauser L."/>
            <person name="Kyrpides N."/>
            <person name="Kim E."/>
            <person name="Tomasz A."/>
            <person name="Richardson P."/>
        </authorList>
    </citation>
    <scope>NUCLEOTIDE SEQUENCE [LARGE SCALE GENOMIC DNA]</scope>
    <source>
        <strain>JH9</strain>
    </source>
</reference>
<keyword id="KW-0216">Detoxification</keyword>
<keyword id="KW-0285">Flavoprotein</keyword>
<keyword id="KW-0288">FMN</keyword>
<keyword id="KW-0503">Monooxygenase</keyword>
<keyword id="KW-0547">Nucleotide-binding</keyword>
<keyword id="KW-0560">Oxidoreductase</keyword>
<proteinExistence type="inferred from homology"/>
<feature type="chain" id="PRO_0000360893" description="Probable nitronate monooxygenase">
    <location>
        <begin position="1"/>
        <end position="355"/>
    </location>
</feature>
<feature type="binding site" evidence="2">
    <location>
        <position position="71"/>
    </location>
    <ligand>
        <name>FMN</name>
        <dbReference type="ChEBI" id="CHEBI:58210"/>
    </ligand>
</feature>
<feature type="binding site" evidence="2">
    <location>
        <position position="175"/>
    </location>
    <ligand>
        <name>FMN</name>
        <dbReference type="ChEBI" id="CHEBI:58210"/>
    </ligand>
</feature>
<feature type="binding site" evidence="2">
    <location>
        <position position="180"/>
    </location>
    <ligand>
        <name>FMN</name>
        <dbReference type="ChEBI" id="CHEBI:58210"/>
    </ligand>
</feature>
<feature type="binding site" evidence="2">
    <location>
        <position position="218"/>
    </location>
    <ligand>
        <name>FMN</name>
        <dbReference type="ChEBI" id="CHEBI:58210"/>
    </ligand>
</feature>
<feature type="binding site" evidence="2">
    <location>
        <begin position="237"/>
        <end position="240"/>
    </location>
    <ligand>
        <name>FMN</name>
        <dbReference type="ChEBI" id="CHEBI:58210"/>
    </ligand>
</feature>
<protein>
    <recommendedName>
        <fullName>Probable nitronate monooxygenase</fullName>
        <shortName>NMO</shortName>
        <ecNumber evidence="2">1.13.12.-</ecNumber>
    </recommendedName>
    <alternativeName>
        <fullName>Propionate 3-nitronate monooxygenase</fullName>
        <shortName>P3N monooxygenase</shortName>
    </alternativeName>
</protein>
<dbReference type="EC" id="1.13.12.-" evidence="2"/>
<dbReference type="EMBL" id="CP000703">
    <property type="protein sequence ID" value="ABQ48720.1"/>
    <property type="molecule type" value="Genomic_DNA"/>
</dbReference>
<dbReference type="RefSeq" id="WP_000267236.1">
    <property type="nucleotide sequence ID" value="NC_009487.1"/>
</dbReference>
<dbReference type="SMR" id="A5IR97"/>
<dbReference type="KEGG" id="saj:SaurJH9_0919"/>
<dbReference type="HOGENOM" id="CLU_038732_5_1_9"/>
<dbReference type="GO" id="GO:0018580">
    <property type="term" value="F:nitronate monooxygenase activity"/>
    <property type="evidence" value="ECO:0007669"/>
    <property type="project" value="InterPro"/>
</dbReference>
<dbReference type="GO" id="GO:0000166">
    <property type="term" value="F:nucleotide binding"/>
    <property type="evidence" value="ECO:0007669"/>
    <property type="project" value="UniProtKB-KW"/>
</dbReference>
<dbReference type="GO" id="GO:0009636">
    <property type="term" value="P:response to toxic substance"/>
    <property type="evidence" value="ECO:0007669"/>
    <property type="project" value="UniProtKB-KW"/>
</dbReference>
<dbReference type="CDD" id="cd04730">
    <property type="entry name" value="NPD_like"/>
    <property type="match status" value="1"/>
</dbReference>
<dbReference type="FunFam" id="3.20.20.70:FF:000154">
    <property type="entry name" value="Probable nitronate monooxygenase"/>
    <property type="match status" value="1"/>
</dbReference>
<dbReference type="Gene3D" id="3.20.20.70">
    <property type="entry name" value="Aldolase class I"/>
    <property type="match status" value="1"/>
</dbReference>
<dbReference type="InterPro" id="IPR013785">
    <property type="entry name" value="Aldolase_TIM"/>
</dbReference>
<dbReference type="InterPro" id="IPR004136">
    <property type="entry name" value="NMO"/>
</dbReference>
<dbReference type="PANTHER" id="PTHR42747">
    <property type="entry name" value="NITRONATE MONOOXYGENASE-RELATED"/>
    <property type="match status" value="1"/>
</dbReference>
<dbReference type="PANTHER" id="PTHR42747:SF3">
    <property type="entry name" value="NITRONATE MONOOXYGENASE-RELATED"/>
    <property type="match status" value="1"/>
</dbReference>
<dbReference type="Pfam" id="PF03060">
    <property type="entry name" value="NMO"/>
    <property type="match status" value="1"/>
</dbReference>
<dbReference type="SUPFAM" id="SSF51412">
    <property type="entry name" value="Inosine monophosphate dehydrogenase (IMPDH)"/>
    <property type="match status" value="1"/>
</dbReference>
<organism>
    <name type="scientific">Staphylococcus aureus (strain JH9)</name>
    <dbReference type="NCBI Taxonomy" id="359786"/>
    <lineage>
        <taxon>Bacteria</taxon>
        <taxon>Bacillati</taxon>
        <taxon>Bacillota</taxon>
        <taxon>Bacilli</taxon>
        <taxon>Bacillales</taxon>
        <taxon>Staphylococcaceae</taxon>
        <taxon>Staphylococcus</taxon>
    </lineage>
</organism>
<name>NMO_STAA9</name>
<comment type="function">
    <text evidence="2">Nitronate monooxygenase that uses molecular oxygen to catalyze the oxidative denitrification of alkyl nitronates. Acts on propionate 3-nitronate (P3N), the presumed physiological substrate. Probably functions in the detoxification of P3N, a metabolic poison produced by plants and fungi as a defense mechanism.</text>
</comment>
<comment type="catalytic activity">
    <reaction evidence="1">
        <text>3 propionate 3-nitronate + 3 O2 + H2O = 3 3-oxopropanoate + 2 nitrate + nitrite + H2O2 + 3 H(+)</text>
        <dbReference type="Rhea" id="RHEA:57332"/>
        <dbReference type="ChEBI" id="CHEBI:15377"/>
        <dbReference type="ChEBI" id="CHEBI:15378"/>
        <dbReference type="ChEBI" id="CHEBI:15379"/>
        <dbReference type="ChEBI" id="CHEBI:16240"/>
        <dbReference type="ChEBI" id="CHEBI:16301"/>
        <dbReference type="ChEBI" id="CHEBI:17632"/>
        <dbReference type="ChEBI" id="CHEBI:33190"/>
        <dbReference type="ChEBI" id="CHEBI:136067"/>
    </reaction>
</comment>
<comment type="cofactor">
    <cofactor evidence="2">
        <name>FMN</name>
        <dbReference type="ChEBI" id="CHEBI:58210"/>
    </cofactor>
    <text evidence="2">Binds 1 FMN per subunit.</text>
</comment>
<comment type="miscellaneous">
    <text evidence="3">P3N is a potent irreversible inhibitor of the key enzyme succinate dehydrogenase in the Krebs cycle and electron transport chain. P3N has been shown to be a toxic metabolite to bacteria, plants, fungi, mammals or any organism that uses succinate dehydrogenase.</text>
</comment>
<comment type="similarity">
    <text evidence="3">Belongs to the nitronate monooxygenase family. NMO class I subfamily.</text>
</comment>
<evidence type="ECO:0000250" key="1">
    <source>
        <dbReference type="UniProtKB" id="D0V3Y4"/>
    </source>
</evidence>
<evidence type="ECO:0000250" key="2">
    <source>
        <dbReference type="UniProtKB" id="Q9HWH9"/>
    </source>
</evidence>
<evidence type="ECO:0000305" key="3"/>
<sequence>MWNKNRLTQMLSIEYPIIQAGMAGSTTPKLVASVSNSGGLGTIGAGYFNTQQLEDEIDYVRQLTSNSFGVNVFVPSQQSYTSSQIENMNAWLKPYRRALHLEEPVVKIIEEQQFKCHIDTIIKKQVPVCCFTFGIPNESIIERLKEANIKLIGTATSVDEAIANEKAGMDAIVAQGSEAGGHRGSFLKPKNQLPMVGTISLVPQIVDVVSIPVIAAGGIMDGRGVLASIVLGAEGVQMGTAFLTSQDSNASELLRDAIINSKETDTVVTKAFSGKLARGINNRFIEEMSQYEGDIPDYPIQNELTSSIRKAAANIGDKELTHMWSGQSPRLATTHPANTIMSNIINQINQIMQYK</sequence>